<reference key="1">
    <citation type="submission" date="2009-06" db="EMBL/GenBank/DDBJ databases">
        <title>Complete sequence of Dickeya dadantii Ech703.</title>
        <authorList>
            <consortium name="US DOE Joint Genome Institute"/>
            <person name="Lucas S."/>
            <person name="Copeland A."/>
            <person name="Lapidus A."/>
            <person name="Glavina del Rio T."/>
            <person name="Dalin E."/>
            <person name="Tice H."/>
            <person name="Bruce D."/>
            <person name="Goodwin L."/>
            <person name="Pitluck S."/>
            <person name="Chertkov O."/>
            <person name="Brettin T."/>
            <person name="Detter J.C."/>
            <person name="Han C."/>
            <person name="Larimer F."/>
            <person name="Land M."/>
            <person name="Hauser L."/>
            <person name="Kyrpides N."/>
            <person name="Mikhailova N."/>
            <person name="Balakrishnan V."/>
            <person name="Glasner J."/>
            <person name="Perna N.T."/>
        </authorList>
    </citation>
    <scope>NUCLEOTIDE SEQUENCE [LARGE SCALE GENOMIC DNA]</scope>
    <source>
        <strain>Ech703</strain>
    </source>
</reference>
<reference key="2">
    <citation type="journal article" date="2014" name="Biochemistry">
        <title>Discovery of function in the enolase superfamily: D-mannonate and D-gluconate dehydratases in the D-mannonate dehydratase subgroup.</title>
        <authorList>
            <person name="Wichelecki D.J."/>
            <person name="Balthazor B.M."/>
            <person name="Chau A.C."/>
            <person name="Vetting M.W."/>
            <person name="Fedorov A.A."/>
            <person name="Fedorov E.V."/>
            <person name="Lukk T."/>
            <person name="Patskovsky Y.V."/>
            <person name="Stead M.B."/>
            <person name="Hillerich B.S."/>
            <person name="Seidel R.D."/>
            <person name="Almo S.C."/>
            <person name="Gerlt J.A."/>
        </authorList>
    </citation>
    <scope>X-RAY CRYSTALLOGRAPHY (2.00 ANGSTROMS) IN COMPLEX WITH MAGNESIUM</scope>
    <scope>FUNCTION</scope>
    <scope>CATALYTIC ACTIVITY</scope>
    <scope>COFACTOR</scope>
    <scope>BIOPHYSICOCHEMICAL PROPERTIES</scope>
</reference>
<comment type="function">
    <text evidence="2">Has low dehydratase activity with D-mannonate and D-gluconate, suggesting that these are not physiological substrates and that it has no significant role in the in vivo degradation of these compounds. Has no detectable activity with a panel of 70 other acid sugars (in vitro).</text>
</comment>
<comment type="catalytic activity">
    <reaction evidence="2">
        <text>D-mannonate = 2-dehydro-3-deoxy-D-gluconate + H2O</text>
        <dbReference type="Rhea" id="RHEA:20097"/>
        <dbReference type="ChEBI" id="CHEBI:15377"/>
        <dbReference type="ChEBI" id="CHEBI:17767"/>
        <dbReference type="ChEBI" id="CHEBI:57990"/>
        <dbReference type="EC" id="4.2.1.8"/>
    </reaction>
</comment>
<comment type="catalytic activity">
    <reaction evidence="2">
        <text>D-gluconate = 2-dehydro-3-deoxy-D-gluconate + H2O</text>
        <dbReference type="Rhea" id="RHEA:21612"/>
        <dbReference type="ChEBI" id="CHEBI:15377"/>
        <dbReference type="ChEBI" id="CHEBI:18391"/>
        <dbReference type="ChEBI" id="CHEBI:57990"/>
        <dbReference type="EC" id="4.2.1.39"/>
    </reaction>
</comment>
<comment type="cofactor">
    <cofactor evidence="2">
        <name>Mg(2+)</name>
        <dbReference type="ChEBI" id="CHEBI:18420"/>
    </cofactor>
    <text evidence="2">Binds 1 Mg(2+) ion per subunit.</text>
</comment>
<comment type="biophysicochemical properties">
    <kinetics>
        <text evidence="2">kcat is 0.04 sec(-1) with D-mannonate. kcat is 0.03 sec(-1) with D-gluconate.</text>
    </kinetics>
</comment>
<comment type="similarity">
    <text evidence="3">Belongs to the mandelate racemase/muconate lactonizing enzyme family. GalD subfamily.</text>
</comment>
<feature type="chain" id="PRO_0000429883" description="D-galactonate dehydratase family member Dd703_0947">
    <location>
        <begin position="1"/>
        <end position="417"/>
    </location>
</feature>
<feature type="active site" description="Proton donor/acceptor" evidence="1">
    <location>
        <position position="158"/>
    </location>
</feature>
<feature type="active site" description="Proton donor/acceptor" evidence="1">
    <location>
        <position position="225"/>
    </location>
</feature>
<feature type="binding site" evidence="1">
    <location>
        <position position="127"/>
    </location>
    <ligand>
        <name>substrate</name>
    </ligand>
</feature>
<feature type="binding site" evidence="2">
    <location>
        <position position="223"/>
    </location>
    <ligand>
        <name>Mg(2+)</name>
        <dbReference type="ChEBI" id="CHEBI:18420"/>
    </ligand>
</feature>
<feature type="binding site" evidence="2">
    <location>
        <position position="249"/>
    </location>
    <ligand>
        <name>Mg(2+)</name>
        <dbReference type="ChEBI" id="CHEBI:18420"/>
    </ligand>
</feature>
<feature type="binding site" evidence="2">
    <location>
        <position position="275"/>
    </location>
    <ligand>
        <name>Mg(2+)</name>
        <dbReference type="ChEBI" id="CHEBI:18420"/>
    </ligand>
</feature>
<feature type="binding site" evidence="1">
    <location>
        <position position="275"/>
    </location>
    <ligand>
        <name>substrate</name>
    </ligand>
</feature>
<feature type="binding site" evidence="1">
    <location>
        <position position="296"/>
    </location>
    <ligand>
        <name>substrate</name>
    </ligand>
</feature>
<feature type="binding site" evidence="1">
    <location>
        <position position="325"/>
    </location>
    <ligand>
        <name>substrate</name>
    </ligand>
</feature>
<feature type="binding site" evidence="1">
    <location>
        <position position="329"/>
    </location>
    <ligand>
        <name>substrate</name>
    </ligand>
</feature>
<feature type="binding site" evidence="1">
    <location>
        <position position="352"/>
    </location>
    <ligand>
        <name>substrate</name>
    </ligand>
</feature>
<feature type="site" description="Important for activity and substrate specificity; Pro is observed in family members with low D-mannonate dehydratase activity" evidence="1">
    <location>
        <position position="327"/>
    </location>
</feature>
<feature type="strand" evidence="4">
    <location>
        <begin position="6"/>
        <end position="14"/>
    </location>
</feature>
<feature type="strand" evidence="4">
    <location>
        <begin position="21"/>
        <end position="30"/>
    </location>
</feature>
<feature type="strand" evidence="4">
    <location>
        <begin position="34"/>
        <end position="38"/>
    </location>
</feature>
<feature type="helix" evidence="4">
    <location>
        <begin position="42"/>
        <end position="44"/>
    </location>
</feature>
<feature type="helix" evidence="4">
    <location>
        <begin position="45"/>
        <end position="54"/>
    </location>
</feature>
<feature type="helix" evidence="4">
    <location>
        <begin position="56"/>
        <end position="60"/>
    </location>
</feature>
<feature type="helix" evidence="4">
    <location>
        <begin position="68"/>
        <end position="76"/>
    </location>
</feature>
<feature type="turn" evidence="4">
    <location>
        <begin position="77"/>
        <end position="79"/>
    </location>
</feature>
<feature type="helix" evidence="4">
    <location>
        <begin position="85"/>
        <end position="106"/>
    </location>
</feature>
<feature type="helix" evidence="4">
    <location>
        <begin position="110"/>
        <end position="113"/>
    </location>
</feature>
<feature type="strand" evidence="4">
    <location>
        <begin position="118"/>
        <end position="132"/>
    </location>
</feature>
<feature type="helix" evidence="4">
    <location>
        <begin position="133"/>
        <end position="145"/>
    </location>
</feature>
<feature type="strand" evidence="4">
    <location>
        <begin position="150"/>
        <end position="157"/>
    </location>
</feature>
<feature type="strand" evidence="4">
    <location>
        <begin position="190"/>
        <end position="193"/>
    </location>
</feature>
<feature type="helix" evidence="4">
    <location>
        <begin position="196"/>
        <end position="214"/>
    </location>
</feature>
<feature type="strand" evidence="4">
    <location>
        <begin position="216"/>
        <end position="223"/>
    </location>
</feature>
<feature type="helix" evidence="4">
    <location>
        <begin position="230"/>
        <end position="240"/>
    </location>
</feature>
<feature type="helix" evidence="4">
    <location>
        <begin position="241"/>
        <end position="243"/>
    </location>
</feature>
<feature type="strand" evidence="4">
    <location>
        <begin position="246"/>
        <end position="249"/>
    </location>
</feature>
<feature type="helix" evidence="4">
    <location>
        <begin position="254"/>
        <end position="259"/>
    </location>
</feature>
<feature type="helix" evidence="4">
    <location>
        <begin position="260"/>
        <end position="266"/>
    </location>
</feature>
<feature type="strand" evidence="4">
    <location>
        <begin position="271"/>
        <end position="273"/>
    </location>
</feature>
<feature type="helix" evidence="4">
    <location>
        <begin position="280"/>
        <end position="288"/>
    </location>
</feature>
<feature type="strand" evidence="4">
    <location>
        <begin position="293"/>
        <end position="295"/>
    </location>
</feature>
<feature type="helix" evidence="4">
    <location>
        <begin position="299"/>
        <end position="302"/>
    </location>
</feature>
<feature type="helix" evidence="4">
    <location>
        <begin position="305"/>
        <end position="317"/>
    </location>
</feature>
<feature type="strand" evidence="4">
    <location>
        <begin position="328"/>
        <end position="330"/>
    </location>
</feature>
<feature type="helix" evidence="4">
    <location>
        <begin position="332"/>
        <end position="344"/>
    </location>
</feature>
<feature type="helix" evidence="4">
    <location>
        <begin position="358"/>
        <end position="363"/>
    </location>
</feature>
<feature type="strand" evidence="4">
    <location>
        <begin position="369"/>
        <end position="371"/>
    </location>
</feature>
<feature type="strand" evidence="4">
    <location>
        <begin position="374"/>
        <end position="376"/>
    </location>
</feature>
<feature type="helix" evidence="4">
    <location>
        <begin position="389"/>
        <end position="392"/>
    </location>
</feature>
<accession>C6CBG9</accession>
<dbReference type="EC" id="4.2.1.-"/>
<dbReference type="EC" id="4.2.1.39"/>
<dbReference type="EC" id="4.2.1.8"/>
<dbReference type="EMBL" id="CP001654">
    <property type="protein sequence ID" value="ACS84754.1"/>
    <property type="molecule type" value="Genomic_DNA"/>
</dbReference>
<dbReference type="RefSeq" id="WP_012764572.1">
    <property type="nucleotide sequence ID" value="NC_012880.1"/>
</dbReference>
<dbReference type="PDB" id="4IHC">
    <property type="method" value="X-ray"/>
    <property type="resolution" value="2.00 A"/>
    <property type="chains" value="A/B/C/D/E/F/G/H=1-417"/>
</dbReference>
<dbReference type="PDBsum" id="4IHC"/>
<dbReference type="SMR" id="C6CBG9"/>
<dbReference type="STRING" id="579405.Dd703_0947"/>
<dbReference type="KEGG" id="dda:Dd703_0947"/>
<dbReference type="eggNOG" id="COG4948">
    <property type="taxonomic scope" value="Bacteria"/>
</dbReference>
<dbReference type="HOGENOM" id="CLU_030273_6_1_6"/>
<dbReference type="EvolutionaryTrace" id="C6CBG9"/>
<dbReference type="Proteomes" id="UP000002734">
    <property type="component" value="Chromosome"/>
</dbReference>
<dbReference type="GO" id="GO:0047929">
    <property type="term" value="F:gluconate dehydratase activity"/>
    <property type="evidence" value="ECO:0000314"/>
    <property type="project" value="UniProtKB"/>
</dbReference>
<dbReference type="GO" id="GO:0000287">
    <property type="term" value="F:magnesium ion binding"/>
    <property type="evidence" value="ECO:0000314"/>
    <property type="project" value="UniProtKB"/>
</dbReference>
<dbReference type="GO" id="GO:0008927">
    <property type="term" value="F:mannonate dehydratase activity"/>
    <property type="evidence" value="ECO:0000314"/>
    <property type="project" value="UniProtKB"/>
</dbReference>
<dbReference type="GO" id="GO:0009063">
    <property type="term" value="P:amino acid catabolic process"/>
    <property type="evidence" value="ECO:0007669"/>
    <property type="project" value="InterPro"/>
</dbReference>
<dbReference type="GO" id="GO:0016052">
    <property type="term" value="P:carbohydrate catabolic process"/>
    <property type="evidence" value="ECO:0000314"/>
    <property type="project" value="UniProtKB"/>
</dbReference>
<dbReference type="FunFam" id="3.20.20.120:FF:000011">
    <property type="entry name" value="D-galactonate dehydratase family member VSWAT3_13707"/>
    <property type="match status" value="1"/>
</dbReference>
<dbReference type="Gene3D" id="3.20.20.120">
    <property type="entry name" value="Enolase-like C-terminal domain"/>
    <property type="match status" value="1"/>
</dbReference>
<dbReference type="Gene3D" id="3.30.390.10">
    <property type="entry name" value="Enolase-like, N-terminal domain"/>
    <property type="match status" value="1"/>
</dbReference>
<dbReference type="InterPro" id="IPR034593">
    <property type="entry name" value="DgoD-like"/>
</dbReference>
<dbReference type="InterPro" id="IPR036849">
    <property type="entry name" value="Enolase-like_C_sf"/>
</dbReference>
<dbReference type="InterPro" id="IPR029017">
    <property type="entry name" value="Enolase-like_N"/>
</dbReference>
<dbReference type="InterPro" id="IPR029065">
    <property type="entry name" value="Enolase_C-like"/>
</dbReference>
<dbReference type="InterPro" id="IPR018110">
    <property type="entry name" value="Mandel_Rmase/mucon_lact_enz_CS"/>
</dbReference>
<dbReference type="InterPro" id="IPR013342">
    <property type="entry name" value="Mandelate_racemase_C"/>
</dbReference>
<dbReference type="InterPro" id="IPR013341">
    <property type="entry name" value="Mandelate_racemase_N_dom"/>
</dbReference>
<dbReference type="PANTHER" id="PTHR48080">
    <property type="entry name" value="D-GALACTONATE DEHYDRATASE-RELATED"/>
    <property type="match status" value="1"/>
</dbReference>
<dbReference type="PANTHER" id="PTHR48080:SF6">
    <property type="entry name" value="STARVATION-SENSING PROTEIN RSPA"/>
    <property type="match status" value="1"/>
</dbReference>
<dbReference type="Pfam" id="PF13378">
    <property type="entry name" value="MR_MLE_C"/>
    <property type="match status" value="1"/>
</dbReference>
<dbReference type="Pfam" id="PF02746">
    <property type="entry name" value="MR_MLE_N"/>
    <property type="match status" value="1"/>
</dbReference>
<dbReference type="SMART" id="SM00922">
    <property type="entry name" value="MR_MLE"/>
    <property type="match status" value="1"/>
</dbReference>
<dbReference type="SUPFAM" id="SSF51604">
    <property type="entry name" value="Enolase C-terminal domain-like"/>
    <property type="match status" value="1"/>
</dbReference>
<dbReference type="SUPFAM" id="SSF54826">
    <property type="entry name" value="Enolase N-terminal domain-like"/>
    <property type="match status" value="1"/>
</dbReference>
<dbReference type="PROSITE" id="PS00908">
    <property type="entry name" value="MR_MLE_1"/>
    <property type="match status" value="1"/>
</dbReference>
<dbReference type="PROSITE" id="PS00909">
    <property type="entry name" value="MR_MLE_2"/>
    <property type="match status" value="1"/>
</dbReference>
<organism>
    <name type="scientific">Musicola paradisiaca (strain Ech703)</name>
    <name type="common">Dickeya paradisiaca</name>
    <name type="synonym">Dickeya dadantii</name>
    <dbReference type="NCBI Taxonomy" id="579405"/>
    <lineage>
        <taxon>Bacteria</taxon>
        <taxon>Pseudomonadati</taxon>
        <taxon>Pseudomonadota</taxon>
        <taxon>Gammaproteobacteria</taxon>
        <taxon>Enterobacterales</taxon>
        <taxon>Pectobacteriaceae</taxon>
        <taxon>Musicola</taxon>
    </lineage>
</organism>
<name>DMGD_MUSP7</name>
<keyword id="KW-0002">3D-structure</keyword>
<keyword id="KW-0456">Lyase</keyword>
<keyword id="KW-0460">Magnesium</keyword>
<keyword id="KW-0479">Metal-binding</keyword>
<protein>
    <recommendedName>
        <fullName>D-galactonate dehydratase family member Dd703_0947</fullName>
        <ecNumber>4.2.1.-</ecNumber>
    </recommendedName>
    <alternativeName>
        <fullName>D-gluconate dehydratase</fullName>
        <ecNumber>4.2.1.39</ecNumber>
    </alternativeName>
    <alternativeName>
        <fullName>D-mannonate dehydratase</fullName>
        <ecNumber>4.2.1.8</ecNumber>
    </alternativeName>
</protein>
<sequence length="417" mass="46153">MSKLKITNVKTILTAPGGIDLAVVKVETNEPGLYGLGCATFTQRIFAVKSAIDEYMAPFLIGKDPTRIEDIWQSAAVSGYWRNGPIMNNALSGVDMALWDIKGKLAGMPVYELLGGKCRDGIPLYCHTDGGDEVEVEDNIRARMEEGYQYVRCQMGMYGGAGTDDLKLIATQLARAKNIQPKRSPRSKTPGIYFDPEAYAKSVPRLFEHLRNKLGFGIEFIHDVHERVTPVTAIQLAKTLEPYQLFYLEDPVAPENIDWLRMLRQQSSTPISMGELFVNINEWKPLIDNKLIDYIRCHVSTIGGITPAKKLAVYSELNGVRTAWHGPGDISPVGVCANMHLDMSSPNFGIQEYTPMNDALREVFPGCPEIDQGYAYVNDKPGLGIDINETLAEKYPCDGGIPSWTMARTPDGTASRP</sequence>
<gene>
    <name type="ordered locus">Dd703_0947</name>
</gene>
<evidence type="ECO:0000250" key="1"/>
<evidence type="ECO:0000269" key="2">
    <source>
    </source>
</evidence>
<evidence type="ECO:0000305" key="3"/>
<evidence type="ECO:0007829" key="4">
    <source>
        <dbReference type="PDB" id="4IHC"/>
    </source>
</evidence>
<proteinExistence type="evidence at protein level"/>